<dbReference type="EMBL" id="M95066">
    <property type="protein sequence ID" value="AAA18553.2"/>
    <property type="molecule type" value="mRNA"/>
</dbReference>
<dbReference type="STRING" id="4577.P29306"/>
<dbReference type="PaxDb" id="4577-GRMZM2G408768_P01"/>
<dbReference type="MaizeGDB" id="25467"/>
<dbReference type="eggNOG" id="KOG0841">
    <property type="taxonomic scope" value="Eukaryota"/>
</dbReference>
<dbReference type="InParanoid" id="P29306"/>
<dbReference type="Proteomes" id="UP000007305">
    <property type="component" value="Unplaced"/>
</dbReference>
<dbReference type="ExpressionAtlas" id="P29306">
    <property type="expression patterns" value="baseline and differential"/>
</dbReference>
<dbReference type="Gene3D" id="1.20.190.20">
    <property type="entry name" value="14-3-3 domain"/>
    <property type="match status" value="1"/>
</dbReference>
<dbReference type="InterPro" id="IPR000308">
    <property type="entry name" value="14-3-3"/>
</dbReference>
<dbReference type="InterPro" id="IPR036815">
    <property type="entry name" value="14-3-3_dom_sf"/>
</dbReference>
<dbReference type="InterPro" id="IPR023410">
    <property type="entry name" value="14-3-3_domain"/>
</dbReference>
<dbReference type="PANTHER" id="PTHR18860">
    <property type="entry name" value="14-3-3 PROTEIN"/>
    <property type="match status" value="1"/>
</dbReference>
<dbReference type="Pfam" id="PF00244">
    <property type="entry name" value="14-3-3"/>
    <property type="match status" value="1"/>
</dbReference>
<dbReference type="SUPFAM" id="SSF48445">
    <property type="entry name" value="14-3-3 protein"/>
    <property type="match status" value="1"/>
</dbReference>
<dbReference type="PROSITE" id="PS00797">
    <property type="entry name" value="1433_2"/>
    <property type="match status" value="1"/>
</dbReference>
<sequence>ILNSPDRACNLAKQAFDEAISELDSLGEESYKDSTLIMQLLXDNLTLWTSDTNEDGGDEIK</sequence>
<keyword id="KW-1185">Reference proteome</keyword>
<name>1433X_MAIZE</name>
<evidence type="ECO:0000305" key="1"/>
<protein>
    <recommendedName>
        <fullName>14-3-3-like protein</fullName>
    </recommendedName>
</protein>
<feature type="chain" id="PRO_0000058693" description="14-3-3-like protein">
    <location>
        <begin position="1" status="less than"/>
        <end position="61" status="greater than"/>
    </location>
</feature>
<feature type="non-terminal residue">
    <location>
        <position position="1"/>
    </location>
</feature>
<feature type="non-terminal residue">
    <location>
        <position position="61"/>
    </location>
</feature>
<accession>P29306</accession>
<organism>
    <name type="scientific">Zea mays</name>
    <name type="common">Maize</name>
    <dbReference type="NCBI Taxonomy" id="4577"/>
    <lineage>
        <taxon>Eukaryota</taxon>
        <taxon>Viridiplantae</taxon>
        <taxon>Streptophyta</taxon>
        <taxon>Embryophyta</taxon>
        <taxon>Tracheophyta</taxon>
        <taxon>Spermatophyta</taxon>
        <taxon>Magnoliopsida</taxon>
        <taxon>Liliopsida</taxon>
        <taxon>Poales</taxon>
        <taxon>Poaceae</taxon>
        <taxon>PACMAD clade</taxon>
        <taxon>Panicoideae</taxon>
        <taxon>Andropogonodae</taxon>
        <taxon>Andropogoneae</taxon>
        <taxon>Tripsacinae</taxon>
        <taxon>Zea</taxon>
    </lineage>
</organism>
<proteinExistence type="evidence at transcript level"/>
<comment type="similarity">
    <text evidence="1">Belongs to the 14-3-3 family.</text>
</comment>
<reference key="1">
    <citation type="journal article" date="1993" name="Plant Physiol.">
        <title>Partial sequence analysis of 130 randomly selected maize cDNA clones.</title>
        <authorList>
            <person name="Keith C.S."/>
            <person name="Hoang D.O."/>
            <person name="Barrett B.M."/>
            <person name="Feigelman B."/>
            <person name="Nelson M.C."/>
            <person name="Thai H."/>
            <person name="Baysdorfer C."/>
        </authorList>
    </citation>
    <scope>NUCLEOTIDE SEQUENCE [MRNA]</scope>
    <source>
        <strain>cv. B73</strain>
    </source>
</reference>